<feature type="chain" id="PRO_0000252697" description="Phosphoribosylformylglycinamidine synthase subunit PurQ">
    <location>
        <begin position="1"/>
        <end position="231"/>
    </location>
</feature>
<feature type="domain" description="Glutamine amidotransferase type-1" evidence="1">
    <location>
        <begin position="3"/>
        <end position="231"/>
    </location>
</feature>
<feature type="active site" description="Nucleophile" evidence="1">
    <location>
        <position position="86"/>
    </location>
</feature>
<feature type="active site" evidence="1">
    <location>
        <position position="203"/>
    </location>
</feature>
<feature type="active site" evidence="1">
    <location>
        <position position="205"/>
    </location>
</feature>
<accession>Q1IPG4</accession>
<reference key="1">
    <citation type="journal article" date="2009" name="Appl. Environ. Microbiol.">
        <title>Three genomes from the phylum Acidobacteria provide insight into the lifestyles of these microorganisms in soils.</title>
        <authorList>
            <person name="Ward N.L."/>
            <person name="Challacombe J.F."/>
            <person name="Janssen P.H."/>
            <person name="Henrissat B."/>
            <person name="Coutinho P.M."/>
            <person name="Wu M."/>
            <person name="Xie G."/>
            <person name="Haft D.H."/>
            <person name="Sait M."/>
            <person name="Badger J."/>
            <person name="Barabote R.D."/>
            <person name="Bradley B."/>
            <person name="Brettin T.S."/>
            <person name="Brinkac L.M."/>
            <person name="Bruce D."/>
            <person name="Creasy T."/>
            <person name="Daugherty S.C."/>
            <person name="Davidsen T.M."/>
            <person name="DeBoy R.T."/>
            <person name="Detter J.C."/>
            <person name="Dodson R.J."/>
            <person name="Durkin A.S."/>
            <person name="Ganapathy A."/>
            <person name="Gwinn-Giglio M."/>
            <person name="Han C.S."/>
            <person name="Khouri H."/>
            <person name="Kiss H."/>
            <person name="Kothari S.P."/>
            <person name="Madupu R."/>
            <person name="Nelson K.E."/>
            <person name="Nelson W.C."/>
            <person name="Paulsen I."/>
            <person name="Penn K."/>
            <person name="Ren Q."/>
            <person name="Rosovitz M.J."/>
            <person name="Selengut J.D."/>
            <person name="Shrivastava S."/>
            <person name="Sullivan S.A."/>
            <person name="Tapia R."/>
            <person name="Thompson L.S."/>
            <person name="Watkins K.L."/>
            <person name="Yang Q."/>
            <person name="Yu C."/>
            <person name="Zafar N."/>
            <person name="Zhou L."/>
            <person name="Kuske C.R."/>
        </authorList>
    </citation>
    <scope>NUCLEOTIDE SEQUENCE [LARGE SCALE GENOMIC DNA]</scope>
    <source>
        <strain>Ellin345</strain>
    </source>
</reference>
<protein>
    <recommendedName>
        <fullName evidence="1">Phosphoribosylformylglycinamidine synthase subunit PurQ</fullName>
        <shortName evidence="1">FGAM synthase</shortName>
        <ecNumber evidence="1">6.3.5.3</ecNumber>
    </recommendedName>
    <alternativeName>
        <fullName evidence="1">Formylglycinamide ribonucleotide amidotransferase subunit I</fullName>
        <shortName evidence="1">FGAR amidotransferase I</shortName>
        <shortName evidence="1">FGAR-AT I</shortName>
    </alternativeName>
    <alternativeName>
        <fullName evidence="1">Glutaminase PurQ</fullName>
        <ecNumber evidence="1">3.5.1.2</ecNumber>
    </alternativeName>
    <alternativeName>
        <fullName evidence="1">Phosphoribosylformylglycinamidine synthase subunit I</fullName>
    </alternativeName>
</protein>
<sequence length="231" mass="25254">MKFGVLIFPGSNCDHDAHWVLGQVAKQPVTFLWHESHDLENCDAIVVPGGFAYGDYLRTGAIAKFSPVMEAVRKFADKGGLVIGICNGFQILTESGLLPGALLRNEGLKYICKPVNIRVETTDAPFTQGLKKGEVLQVPIGHMEGNYVCDDATLAELKKQDRIVFRYATPDGQITREANPNGSIENIAGICNEGRNVLGMMPHPERASENELGMTDGFRIFESMVGAMAKR</sequence>
<comment type="function">
    <text evidence="1">Part of the phosphoribosylformylglycinamidine synthase complex involved in the purines biosynthetic pathway. Catalyzes the ATP-dependent conversion of formylglycinamide ribonucleotide (FGAR) and glutamine to yield formylglycinamidine ribonucleotide (FGAM) and glutamate. The FGAM synthase complex is composed of three subunits. PurQ produces an ammonia molecule by converting glutamine to glutamate. PurL transfers the ammonia molecule to FGAR to form FGAM in an ATP-dependent manner. PurS interacts with PurQ and PurL and is thought to assist in the transfer of the ammonia molecule from PurQ to PurL.</text>
</comment>
<comment type="catalytic activity">
    <reaction evidence="1">
        <text>N(2)-formyl-N(1)-(5-phospho-beta-D-ribosyl)glycinamide + L-glutamine + ATP + H2O = 2-formamido-N(1)-(5-O-phospho-beta-D-ribosyl)acetamidine + L-glutamate + ADP + phosphate + H(+)</text>
        <dbReference type="Rhea" id="RHEA:17129"/>
        <dbReference type="ChEBI" id="CHEBI:15377"/>
        <dbReference type="ChEBI" id="CHEBI:15378"/>
        <dbReference type="ChEBI" id="CHEBI:29985"/>
        <dbReference type="ChEBI" id="CHEBI:30616"/>
        <dbReference type="ChEBI" id="CHEBI:43474"/>
        <dbReference type="ChEBI" id="CHEBI:58359"/>
        <dbReference type="ChEBI" id="CHEBI:147286"/>
        <dbReference type="ChEBI" id="CHEBI:147287"/>
        <dbReference type="ChEBI" id="CHEBI:456216"/>
        <dbReference type="EC" id="6.3.5.3"/>
    </reaction>
</comment>
<comment type="catalytic activity">
    <reaction evidence="1">
        <text>L-glutamine + H2O = L-glutamate + NH4(+)</text>
        <dbReference type="Rhea" id="RHEA:15889"/>
        <dbReference type="ChEBI" id="CHEBI:15377"/>
        <dbReference type="ChEBI" id="CHEBI:28938"/>
        <dbReference type="ChEBI" id="CHEBI:29985"/>
        <dbReference type="ChEBI" id="CHEBI:58359"/>
        <dbReference type="EC" id="3.5.1.2"/>
    </reaction>
</comment>
<comment type="pathway">
    <text evidence="1">Purine metabolism; IMP biosynthesis via de novo pathway; 5-amino-1-(5-phospho-D-ribosyl)imidazole from N(2)-formyl-N(1)-(5-phospho-D-ribosyl)glycinamide: step 1/2.</text>
</comment>
<comment type="subunit">
    <text evidence="1">Part of the FGAM synthase complex composed of 1 PurL, 1 PurQ and 2 PurS subunits.</text>
</comment>
<comment type="subcellular location">
    <subcellularLocation>
        <location evidence="1">Cytoplasm</location>
    </subcellularLocation>
</comment>
<dbReference type="EC" id="6.3.5.3" evidence="1"/>
<dbReference type="EC" id="3.5.1.2" evidence="1"/>
<dbReference type="EMBL" id="CP000360">
    <property type="protein sequence ID" value="ABF41236.1"/>
    <property type="molecule type" value="Genomic_DNA"/>
</dbReference>
<dbReference type="RefSeq" id="WP_011523037.1">
    <property type="nucleotide sequence ID" value="NC_008009.1"/>
</dbReference>
<dbReference type="SMR" id="Q1IPG4"/>
<dbReference type="STRING" id="204669.Acid345_2235"/>
<dbReference type="EnsemblBacteria" id="ABF41236">
    <property type="protein sequence ID" value="ABF41236"/>
    <property type="gene ID" value="Acid345_2235"/>
</dbReference>
<dbReference type="KEGG" id="aba:Acid345_2235"/>
<dbReference type="eggNOG" id="COG0047">
    <property type="taxonomic scope" value="Bacteria"/>
</dbReference>
<dbReference type="HOGENOM" id="CLU_001031_3_1_0"/>
<dbReference type="OrthoDB" id="9804441at2"/>
<dbReference type="UniPathway" id="UPA00074">
    <property type="reaction ID" value="UER00128"/>
</dbReference>
<dbReference type="Proteomes" id="UP000002432">
    <property type="component" value="Chromosome"/>
</dbReference>
<dbReference type="GO" id="GO:0005737">
    <property type="term" value="C:cytoplasm"/>
    <property type="evidence" value="ECO:0007669"/>
    <property type="project" value="UniProtKB-SubCell"/>
</dbReference>
<dbReference type="GO" id="GO:0005524">
    <property type="term" value="F:ATP binding"/>
    <property type="evidence" value="ECO:0007669"/>
    <property type="project" value="UniProtKB-KW"/>
</dbReference>
<dbReference type="GO" id="GO:0004359">
    <property type="term" value="F:glutaminase activity"/>
    <property type="evidence" value="ECO:0007669"/>
    <property type="project" value="UniProtKB-EC"/>
</dbReference>
<dbReference type="GO" id="GO:0004642">
    <property type="term" value="F:phosphoribosylformylglycinamidine synthase activity"/>
    <property type="evidence" value="ECO:0007669"/>
    <property type="project" value="UniProtKB-UniRule"/>
</dbReference>
<dbReference type="GO" id="GO:0006189">
    <property type="term" value="P:'de novo' IMP biosynthetic process"/>
    <property type="evidence" value="ECO:0007669"/>
    <property type="project" value="UniProtKB-UniRule"/>
</dbReference>
<dbReference type="CDD" id="cd01740">
    <property type="entry name" value="GATase1_FGAR_AT"/>
    <property type="match status" value="1"/>
</dbReference>
<dbReference type="Gene3D" id="3.40.50.880">
    <property type="match status" value="1"/>
</dbReference>
<dbReference type="HAMAP" id="MF_00421">
    <property type="entry name" value="PurQ"/>
    <property type="match status" value="1"/>
</dbReference>
<dbReference type="InterPro" id="IPR029062">
    <property type="entry name" value="Class_I_gatase-like"/>
</dbReference>
<dbReference type="InterPro" id="IPR010075">
    <property type="entry name" value="PRibForGlyAmidine_synth_PurQ"/>
</dbReference>
<dbReference type="NCBIfam" id="TIGR01737">
    <property type="entry name" value="FGAM_synth_I"/>
    <property type="match status" value="1"/>
</dbReference>
<dbReference type="NCBIfam" id="NF002957">
    <property type="entry name" value="PRK03619.1"/>
    <property type="match status" value="1"/>
</dbReference>
<dbReference type="PANTHER" id="PTHR47552">
    <property type="entry name" value="PHOSPHORIBOSYLFORMYLGLYCINAMIDINE SYNTHASE SUBUNIT PURQ"/>
    <property type="match status" value="1"/>
</dbReference>
<dbReference type="PANTHER" id="PTHR47552:SF1">
    <property type="entry name" value="PHOSPHORIBOSYLFORMYLGLYCINAMIDINE SYNTHASE SUBUNIT PURQ"/>
    <property type="match status" value="1"/>
</dbReference>
<dbReference type="Pfam" id="PF13507">
    <property type="entry name" value="GATase_5"/>
    <property type="match status" value="1"/>
</dbReference>
<dbReference type="PIRSF" id="PIRSF001586">
    <property type="entry name" value="FGAM_synth_I"/>
    <property type="match status" value="1"/>
</dbReference>
<dbReference type="SMART" id="SM01211">
    <property type="entry name" value="GATase_5"/>
    <property type="match status" value="1"/>
</dbReference>
<dbReference type="SUPFAM" id="SSF52317">
    <property type="entry name" value="Class I glutamine amidotransferase-like"/>
    <property type="match status" value="1"/>
</dbReference>
<dbReference type="PROSITE" id="PS51273">
    <property type="entry name" value="GATASE_TYPE_1"/>
    <property type="match status" value="1"/>
</dbReference>
<evidence type="ECO:0000255" key="1">
    <source>
        <dbReference type="HAMAP-Rule" id="MF_00421"/>
    </source>
</evidence>
<name>PURQ_KORVE</name>
<organism>
    <name type="scientific">Koribacter versatilis (strain Ellin345)</name>
    <dbReference type="NCBI Taxonomy" id="204669"/>
    <lineage>
        <taxon>Bacteria</taxon>
        <taxon>Pseudomonadati</taxon>
        <taxon>Acidobacteriota</taxon>
        <taxon>Terriglobia</taxon>
        <taxon>Terriglobales</taxon>
        <taxon>Candidatus Korobacteraceae</taxon>
        <taxon>Candidatus Korobacter</taxon>
    </lineage>
</organism>
<keyword id="KW-0067">ATP-binding</keyword>
<keyword id="KW-0963">Cytoplasm</keyword>
<keyword id="KW-0315">Glutamine amidotransferase</keyword>
<keyword id="KW-0378">Hydrolase</keyword>
<keyword id="KW-0436">Ligase</keyword>
<keyword id="KW-0547">Nucleotide-binding</keyword>
<keyword id="KW-0658">Purine biosynthesis</keyword>
<keyword id="KW-1185">Reference proteome</keyword>
<gene>
    <name evidence="1" type="primary">purQ</name>
    <name type="ordered locus">Acid345_2235</name>
</gene>
<proteinExistence type="inferred from homology"/>